<comment type="function">
    <text evidence="4">Involved in morphogenesis and proliferation of peroxisomes and mitochondria, independently from the previously defined pathway controlled by the FIS1-DRP3 complex.</text>
</comment>
<comment type="subunit">
    <text evidence="4">Homodimer. Interacts with PMD2.</text>
</comment>
<comment type="subcellular location">
    <subcellularLocation>
        <location evidence="4">Peroxisome membrane</location>
        <topology evidence="1">Single-pass membrane protein</topology>
    </subcellularLocation>
    <subcellularLocation>
        <location evidence="3 4">Mitochondrion outer membrane</location>
        <topology evidence="1">Single-pass membrane protein</topology>
    </subcellularLocation>
</comment>
<comment type="disruption phenotype">
    <text evidence="4">Enlarged peroxisomes and elongated mitochondria.</text>
</comment>
<gene>
    <name evidence="5" type="primary">PMD1</name>
    <name evidence="8" type="ordered locus">At3g58840</name>
    <name evidence="9" type="ORF">T20N10.190</name>
</gene>
<keyword id="KW-0175">Coiled coil</keyword>
<keyword id="KW-0472">Membrane</keyword>
<keyword id="KW-0496">Mitochondrion</keyword>
<keyword id="KW-1000">Mitochondrion outer membrane</keyword>
<keyword id="KW-0576">Peroxisome</keyword>
<keyword id="KW-0962">Peroxisome biogenesis</keyword>
<keyword id="KW-1185">Reference proteome</keyword>
<keyword id="KW-0812">Transmembrane</keyword>
<keyword id="KW-1133">Transmembrane helix</keyword>
<dbReference type="EMBL" id="AL353032">
    <property type="protein sequence ID" value="CAB88301.1"/>
    <property type="molecule type" value="Genomic_DNA"/>
</dbReference>
<dbReference type="EMBL" id="CP002686">
    <property type="protein sequence ID" value="AEE79838.1"/>
    <property type="molecule type" value="Genomic_DNA"/>
</dbReference>
<dbReference type="EMBL" id="CP002686">
    <property type="protein sequence ID" value="AEE79839.1"/>
    <property type="molecule type" value="Genomic_DNA"/>
</dbReference>
<dbReference type="EMBL" id="BT024778">
    <property type="protein sequence ID" value="ABD59116.1"/>
    <property type="molecule type" value="mRNA"/>
</dbReference>
<dbReference type="EMBL" id="AY088565">
    <property type="protein sequence ID" value="AAM66096.1"/>
    <property type="molecule type" value="mRNA"/>
</dbReference>
<dbReference type="PIR" id="T49167">
    <property type="entry name" value="T49167"/>
</dbReference>
<dbReference type="RefSeq" id="NP_001078312.1">
    <property type="nucleotide sequence ID" value="NM_001084843.2"/>
</dbReference>
<dbReference type="RefSeq" id="NP_191443.1">
    <property type="nucleotide sequence ID" value="NM_115746.1"/>
</dbReference>
<dbReference type="SMR" id="Q9LXR8"/>
<dbReference type="FunCoup" id="Q9LXR8">
    <property type="interactions" value="2046"/>
</dbReference>
<dbReference type="STRING" id="3702.Q9LXR8"/>
<dbReference type="PaxDb" id="3702-AT3G58840.1"/>
<dbReference type="ProteomicsDB" id="234744"/>
<dbReference type="EnsemblPlants" id="AT3G58840.1">
    <property type="protein sequence ID" value="AT3G58840.1"/>
    <property type="gene ID" value="AT3G58840"/>
</dbReference>
<dbReference type="EnsemblPlants" id="AT3G58840.2">
    <property type="protein sequence ID" value="AT3G58840.2"/>
    <property type="gene ID" value="AT3G58840"/>
</dbReference>
<dbReference type="GeneID" id="825053"/>
<dbReference type="Gramene" id="AT3G58840.1">
    <property type="protein sequence ID" value="AT3G58840.1"/>
    <property type="gene ID" value="AT3G58840"/>
</dbReference>
<dbReference type="Gramene" id="AT3G58840.2">
    <property type="protein sequence ID" value="AT3G58840.2"/>
    <property type="gene ID" value="AT3G58840"/>
</dbReference>
<dbReference type="KEGG" id="ath:AT3G58840"/>
<dbReference type="Araport" id="AT3G58840"/>
<dbReference type="TAIR" id="AT3G58840">
    <property type="gene designation" value="PMD1"/>
</dbReference>
<dbReference type="eggNOG" id="ENOG502RY0Y">
    <property type="taxonomic scope" value="Eukaryota"/>
</dbReference>
<dbReference type="HOGENOM" id="CLU_074678_0_0_1"/>
<dbReference type="InParanoid" id="Q9LXR8"/>
<dbReference type="OMA" id="KRITEMM"/>
<dbReference type="OrthoDB" id="1939306at2759"/>
<dbReference type="PhylomeDB" id="Q9LXR8"/>
<dbReference type="PRO" id="PR:Q9LXR8"/>
<dbReference type="Proteomes" id="UP000006548">
    <property type="component" value="Chromosome 3"/>
</dbReference>
<dbReference type="ExpressionAtlas" id="Q9LXR8">
    <property type="expression patterns" value="baseline and differential"/>
</dbReference>
<dbReference type="GO" id="GO:0005829">
    <property type="term" value="C:cytosol"/>
    <property type="evidence" value="ECO:0007005"/>
    <property type="project" value="TAIR"/>
</dbReference>
<dbReference type="GO" id="GO:0031966">
    <property type="term" value="C:mitochondrial membrane"/>
    <property type="evidence" value="ECO:0000314"/>
    <property type="project" value="TAIR"/>
</dbReference>
<dbReference type="GO" id="GO:0005741">
    <property type="term" value="C:mitochondrial outer membrane"/>
    <property type="evidence" value="ECO:0007669"/>
    <property type="project" value="UniProtKB-SubCell"/>
</dbReference>
<dbReference type="GO" id="GO:0005739">
    <property type="term" value="C:mitochondrion"/>
    <property type="evidence" value="ECO:0000314"/>
    <property type="project" value="TAIR"/>
</dbReference>
<dbReference type="GO" id="GO:0005778">
    <property type="term" value="C:peroxisomal membrane"/>
    <property type="evidence" value="ECO:0000314"/>
    <property type="project" value="TAIR"/>
</dbReference>
<dbReference type="GO" id="GO:0005777">
    <property type="term" value="C:peroxisome"/>
    <property type="evidence" value="ECO:0000314"/>
    <property type="project" value="TAIR"/>
</dbReference>
<dbReference type="GO" id="GO:0042803">
    <property type="term" value="F:protein homodimerization activity"/>
    <property type="evidence" value="ECO:0000353"/>
    <property type="project" value="UniProtKB"/>
</dbReference>
<dbReference type="GO" id="GO:0007005">
    <property type="term" value="P:mitochondrion organization"/>
    <property type="evidence" value="ECO:0000315"/>
    <property type="project" value="TAIR"/>
</dbReference>
<dbReference type="GO" id="GO:0007031">
    <property type="term" value="P:peroxisome organization"/>
    <property type="evidence" value="ECO:0000315"/>
    <property type="project" value="TAIR"/>
</dbReference>
<reference key="1">
    <citation type="journal article" date="2000" name="Nature">
        <title>Sequence and analysis of chromosome 3 of the plant Arabidopsis thaliana.</title>
        <authorList>
            <person name="Salanoubat M."/>
            <person name="Lemcke K."/>
            <person name="Rieger M."/>
            <person name="Ansorge W."/>
            <person name="Unseld M."/>
            <person name="Fartmann B."/>
            <person name="Valle G."/>
            <person name="Bloecker H."/>
            <person name="Perez-Alonso M."/>
            <person name="Obermaier B."/>
            <person name="Delseny M."/>
            <person name="Boutry M."/>
            <person name="Grivell L.A."/>
            <person name="Mache R."/>
            <person name="Puigdomenech P."/>
            <person name="De Simone V."/>
            <person name="Choisne N."/>
            <person name="Artiguenave F."/>
            <person name="Robert C."/>
            <person name="Brottier P."/>
            <person name="Wincker P."/>
            <person name="Cattolico L."/>
            <person name="Weissenbach J."/>
            <person name="Saurin W."/>
            <person name="Quetier F."/>
            <person name="Schaefer M."/>
            <person name="Mueller-Auer S."/>
            <person name="Gabel C."/>
            <person name="Fuchs M."/>
            <person name="Benes V."/>
            <person name="Wurmbach E."/>
            <person name="Drzonek H."/>
            <person name="Erfle H."/>
            <person name="Jordan N."/>
            <person name="Bangert S."/>
            <person name="Wiedelmann R."/>
            <person name="Kranz H."/>
            <person name="Voss H."/>
            <person name="Holland R."/>
            <person name="Brandt P."/>
            <person name="Nyakatura G."/>
            <person name="Vezzi A."/>
            <person name="D'Angelo M."/>
            <person name="Pallavicini A."/>
            <person name="Toppo S."/>
            <person name="Simionati B."/>
            <person name="Conrad A."/>
            <person name="Hornischer K."/>
            <person name="Kauer G."/>
            <person name="Loehnert T.-H."/>
            <person name="Nordsiek G."/>
            <person name="Reichelt J."/>
            <person name="Scharfe M."/>
            <person name="Schoen O."/>
            <person name="Bargues M."/>
            <person name="Terol J."/>
            <person name="Climent J."/>
            <person name="Navarro P."/>
            <person name="Collado C."/>
            <person name="Perez-Perez A."/>
            <person name="Ottenwaelder B."/>
            <person name="Duchemin D."/>
            <person name="Cooke R."/>
            <person name="Laudie M."/>
            <person name="Berger-Llauro C."/>
            <person name="Purnelle B."/>
            <person name="Masuy D."/>
            <person name="de Haan M."/>
            <person name="Maarse A.C."/>
            <person name="Alcaraz J.-P."/>
            <person name="Cottet A."/>
            <person name="Casacuberta E."/>
            <person name="Monfort A."/>
            <person name="Argiriou A."/>
            <person name="Flores M."/>
            <person name="Liguori R."/>
            <person name="Vitale D."/>
            <person name="Mannhaupt G."/>
            <person name="Haase D."/>
            <person name="Schoof H."/>
            <person name="Rudd S."/>
            <person name="Zaccaria P."/>
            <person name="Mewes H.-W."/>
            <person name="Mayer K.F.X."/>
            <person name="Kaul S."/>
            <person name="Town C.D."/>
            <person name="Koo H.L."/>
            <person name="Tallon L.J."/>
            <person name="Jenkins J."/>
            <person name="Rooney T."/>
            <person name="Rizzo M."/>
            <person name="Walts A."/>
            <person name="Utterback T."/>
            <person name="Fujii C.Y."/>
            <person name="Shea T.P."/>
            <person name="Creasy T.H."/>
            <person name="Haas B."/>
            <person name="Maiti R."/>
            <person name="Wu D."/>
            <person name="Peterson J."/>
            <person name="Van Aken S."/>
            <person name="Pai G."/>
            <person name="Militscher J."/>
            <person name="Sellers P."/>
            <person name="Gill J.E."/>
            <person name="Feldblyum T.V."/>
            <person name="Preuss D."/>
            <person name="Lin X."/>
            <person name="Nierman W.C."/>
            <person name="Salzberg S.L."/>
            <person name="White O."/>
            <person name="Venter J.C."/>
            <person name="Fraser C.M."/>
            <person name="Kaneko T."/>
            <person name="Nakamura Y."/>
            <person name="Sato S."/>
            <person name="Kato T."/>
            <person name="Asamizu E."/>
            <person name="Sasamoto S."/>
            <person name="Kimura T."/>
            <person name="Idesawa K."/>
            <person name="Kawashima K."/>
            <person name="Kishida Y."/>
            <person name="Kiyokawa C."/>
            <person name="Kohara M."/>
            <person name="Matsumoto M."/>
            <person name="Matsuno A."/>
            <person name="Muraki A."/>
            <person name="Nakayama S."/>
            <person name="Nakazaki N."/>
            <person name="Shinpo S."/>
            <person name="Takeuchi C."/>
            <person name="Wada T."/>
            <person name="Watanabe A."/>
            <person name="Yamada M."/>
            <person name="Yasuda M."/>
            <person name="Tabata S."/>
        </authorList>
    </citation>
    <scope>NUCLEOTIDE SEQUENCE [LARGE SCALE GENOMIC DNA]</scope>
    <source>
        <strain>cv. Columbia</strain>
    </source>
</reference>
<reference key="2">
    <citation type="journal article" date="2017" name="Plant J.">
        <title>Araport11: a complete reannotation of the Arabidopsis thaliana reference genome.</title>
        <authorList>
            <person name="Cheng C.Y."/>
            <person name="Krishnakumar V."/>
            <person name="Chan A.P."/>
            <person name="Thibaud-Nissen F."/>
            <person name="Schobel S."/>
            <person name="Town C.D."/>
        </authorList>
    </citation>
    <scope>GENOME REANNOTATION</scope>
    <source>
        <strain>cv. Columbia</strain>
    </source>
</reference>
<reference key="3">
    <citation type="submission" date="2006-03" db="EMBL/GenBank/DDBJ databases">
        <title>Arabidopsis ORF clones.</title>
        <authorList>
            <person name="Shinn P."/>
            <person name="Chen H."/>
            <person name="Kim C.J."/>
            <person name="Ecker J.R."/>
        </authorList>
    </citation>
    <scope>NUCLEOTIDE SEQUENCE [LARGE SCALE MRNA]</scope>
    <source>
        <strain>cv. Columbia</strain>
    </source>
</reference>
<reference key="4">
    <citation type="submission" date="2002-03" db="EMBL/GenBank/DDBJ databases">
        <title>Full-length cDNA from Arabidopsis thaliana.</title>
        <authorList>
            <person name="Brover V.V."/>
            <person name="Troukhan M.E."/>
            <person name="Alexandrov N.A."/>
            <person name="Lu Y.-P."/>
            <person name="Flavell R.B."/>
            <person name="Feldmann K.A."/>
        </authorList>
    </citation>
    <scope>NUCLEOTIDE SEQUENCE [LARGE SCALE MRNA]</scope>
</reference>
<reference key="5">
    <citation type="journal article" date="2011" name="Plant Cell">
        <title>The Arabidopsis tail-anchored protein PEROXISOMAL AND MITOCHONDRIAL DIVISION FACTOR1 is involved in the morphogenesis and proliferation of peroxisomes and mitochondria.</title>
        <authorList>
            <person name="Aung K."/>
            <person name="Hu J."/>
        </authorList>
    </citation>
    <scope>FUNCTION</scope>
    <scope>SUBUNIT</scope>
    <scope>INTERACTION WITH PMD2</scope>
    <scope>SUBCELLULAR LOCATION</scope>
    <scope>TOPOLOGY</scope>
    <scope>DISRUPTION PHENOTYPE</scope>
</reference>
<reference key="6">
    <citation type="journal article" date="2011" name="Plant Physiol.">
        <title>Multiple lines of evidence localize signaling, morphology, and lipid biosynthesis machinery to the mitochondrial outer membrane of Arabidopsis.</title>
        <authorList>
            <person name="Duncan O."/>
            <person name="Taylor N.L."/>
            <person name="Carrie C."/>
            <person name="Eubel H."/>
            <person name="Kubiszewski-Jakubiak S."/>
            <person name="Zhang B."/>
            <person name="Narsai R."/>
            <person name="Millar A.H."/>
            <person name="Whelan J."/>
        </authorList>
    </citation>
    <scope>SUBCELLULAR LOCATION</scope>
</reference>
<name>PMD1_ARATH</name>
<evidence type="ECO:0000255" key="1"/>
<evidence type="ECO:0000256" key="2">
    <source>
        <dbReference type="SAM" id="MobiDB-lite"/>
    </source>
</evidence>
<evidence type="ECO:0000269" key="3">
    <source>
    </source>
</evidence>
<evidence type="ECO:0000269" key="4">
    <source>
    </source>
</evidence>
<evidence type="ECO:0000303" key="5">
    <source>
    </source>
</evidence>
<evidence type="ECO:0000305" key="6"/>
<evidence type="ECO:0000305" key="7">
    <source>
    </source>
</evidence>
<evidence type="ECO:0000312" key="8">
    <source>
        <dbReference type="Araport" id="AT3G58840"/>
    </source>
</evidence>
<evidence type="ECO:0000312" key="9">
    <source>
        <dbReference type="EMBL" id="CAB88301.1"/>
    </source>
</evidence>
<sequence>MADVEDRAAKGISDYDQGGVKTTELERKIEDMENKNQELTRENRELKERLERLTGEIEEMKDVEAEMNQRFGEMEKEIEEYEEEKKALEAISTRAVELETEVSNLHDDLITSLNGVDKTAEEVAELKKALAEIVEKLEGCEKEAEGLRKDRAEVEKRVRDLERKIGVLEVREMEEKSKKLRSEEEMREIDDEKKREIEELQKTVIVLNLELVKNVEELKKWKSKKKLTEEALSETQKREKELELKKDELLKKVEEGNKTVFALNERTMKPSNGVRDTNGGDQKGSLEAEYQWPVVAAGSVGAAGLVAATFFVCYSKLR</sequence>
<protein>
    <recommendedName>
        <fullName evidence="5">Peroxisomal and mitochondrial division factor 1</fullName>
    </recommendedName>
</protein>
<accession>Q9LXR8</accession>
<accession>Q8L998</accession>
<organism>
    <name type="scientific">Arabidopsis thaliana</name>
    <name type="common">Mouse-ear cress</name>
    <dbReference type="NCBI Taxonomy" id="3702"/>
    <lineage>
        <taxon>Eukaryota</taxon>
        <taxon>Viridiplantae</taxon>
        <taxon>Streptophyta</taxon>
        <taxon>Embryophyta</taxon>
        <taxon>Tracheophyta</taxon>
        <taxon>Spermatophyta</taxon>
        <taxon>Magnoliopsida</taxon>
        <taxon>eudicotyledons</taxon>
        <taxon>Gunneridae</taxon>
        <taxon>Pentapetalae</taxon>
        <taxon>rosids</taxon>
        <taxon>malvids</taxon>
        <taxon>Brassicales</taxon>
        <taxon>Brassicaceae</taxon>
        <taxon>Camelineae</taxon>
        <taxon>Arabidopsis</taxon>
    </lineage>
</organism>
<feature type="chain" id="PRO_0000432895" description="Peroxisomal and mitochondrial division factor 1">
    <location>
        <begin position="1"/>
        <end position="318"/>
    </location>
</feature>
<feature type="topological domain" description="Cytoplasmic" evidence="7">
    <location>
        <begin position="1"/>
        <end position="291"/>
    </location>
</feature>
<feature type="transmembrane region" description="Helical" evidence="1">
    <location>
        <begin position="292"/>
        <end position="312"/>
    </location>
</feature>
<feature type="topological domain" description="Mitochondrial intermembrane" evidence="7">
    <location>
        <begin position="313"/>
        <end position="318"/>
    </location>
</feature>
<feature type="region of interest" description="Disordered" evidence="2">
    <location>
        <begin position="1"/>
        <end position="39"/>
    </location>
</feature>
<feature type="coiled-coil region" evidence="1">
    <location>
        <begin position="19"/>
        <end position="260"/>
    </location>
</feature>
<feature type="compositionally biased region" description="Basic and acidic residues" evidence="2">
    <location>
        <begin position="23"/>
        <end position="39"/>
    </location>
</feature>
<feature type="sequence conflict" description="In Ref. 4; AAM66096." evidence="6" ref="4">
    <original>K</original>
    <variation>E</variation>
    <location>
        <position position="224"/>
    </location>
</feature>
<proteinExistence type="evidence at protein level"/>